<gene>
    <name evidence="1" type="primary">fam83d</name>
    <name evidence="4" type="ORF">zgc:162965</name>
</gene>
<proteinExistence type="evidence at transcript level"/>
<organism>
    <name type="scientific">Danio rerio</name>
    <name type="common">Zebrafish</name>
    <name type="synonym">Brachydanio rerio</name>
    <dbReference type="NCBI Taxonomy" id="7955"/>
    <lineage>
        <taxon>Eukaryota</taxon>
        <taxon>Metazoa</taxon>
        <taxon>Chordata</taxon>
        <taxon>Craniata</taxon>
        <taxon>Vertebrata</taxon>
        <taxon>Euteleostomi</taxon>
        <taxon>Actinopterygii</taxon>
        <taxon>Neopterygii</taxon>
        <taxon>Teleostei</taxon>
        <taxon>Ostariophysi</taxon>
        <taxon>Cypriniformes</taxon>
        <taxon>Danionidae</taxon>
        <taxon>Danioninae</taxon>
        <taxon>Danio</taxon>
    </lineage>
</organism>
<evidence type="ECO:0000250" key="1">
    <source>
        <dbReference type="UniProtKB" id="Q9H4H8"/>
    </source>
</evidence>
<evidence type="ECO:0000256" key="2">
    <source>
        <dbReference type="SAM" id="MobiDB-lite"/>
    </source>
</evidence>
<evidence type="ECO:0000305" key="3"/>
<evidence type="ECO:0000312" key="4">
    <source>
        <dbReference type="EMBL" id="AAI39680.1"/>
    </source>
</evidence>
<feature type="chain" id="PRO_0000365009" description="Protein FAM83D">
    <location>
        <begin position="1"/>
        <end position="534"/>
    </location>
</feature>
<feature type="region of interest" description="Disordered" evidence="2">
    <location>
        <begin position="320"/>
        <end position="372"/>
    </location>
</feature>
<feature type="region of interest" description="Disordered" evidence="2">
    <location>
        <begin position="501"/>
        <end position="534"/>
    </location>
</feature>
<feature type="compositionally biased region" description="Polar residues" evidence="2">
    <location>
        <begin position="329"/>
        <end position="342"/>
    </location>
</feature>
<feature type="compositionally biased region" description="Basic and acidic residues" evidence="2">
    <location>
        <begin position="350"/>
        <end position="362"/>
    </location>
</feature>
<feature type="compositionally biased region" description="Polar residues" evidence="2">
    <location>
        <begin position="511"/>
        <end position="520"/>
    </location>
</feature>
<sequence>MALSQCLEDSPGWRTPRKEQDSNLNELYNERHRLALEELVAGGVQSFMGFLKKERMPNFLSEDEIRRVSRAAVVPKTISINGDDSHLDQSGTLDCSSVTYFPEVSDIEPPVLENGWPAFTTGSYRGVTRAVAYFQPSYGECIYSCKEAARRMIRNAKEVIAIVTDSMTDLDIFHDLREACTRRRVPVYILLDQSSVASFLQMCKNLCVHLDELLQMKVRTITGSTYYMRSGARITGKVHERFMLIDGNKVATGSYRFNWTDGKLNSSNLIELSGQITEKFDEEFRILYAQSLPLPVNTRAPSSARNCSLYDHLVLKAPGTPPSYLARTTKPQAERLTSTPARLQTPEIQRMNKDIEEPDRKSNPVSDSSTLGEDLELPLASADPPRLPSTTVNSQTQTVDVTIVSCCDVSTQTTCHTADVSVQTCKEPQNSKPSSEHQEVDSCPPICPLPQDVNFRECFLKITKERQHHYSSIRSKLDHMVTLLSHKRELVDLTNLPLRPGLNRGRKAQQEARQPNTNIDSGIMGTWPKSRGLQ</sequence>
<name>FA83D_DANRE</name>
<dbReference type="EMBL" id="BC139679">
    <property type="protein sequence ID" value="AAI39680.1"/>
    <property type="molecule type" value="mRNA"/>
</dbReference>
<dbReference type="RefSeq" id="NP_001082824.1">
    <property type="nucleotide sequence ID" value="NM_001089355.1"/>
</dbReference>
<dbReference type="SMR" id="A4QP72"/>
<dbReference type="FunCoup" id="A4QP72">
    <property type="interactions" value="2020"/>
</dbReference>
<dbReference type="STRING" id="7955.ENSDARP00000100036"/>
<dbReference type="PaxDb" id="7955-ENSDARP00000107897"/>
<dbReference type="GeneID" id="492689"/>
<dbReference type="KEGG" id="dre:492689"/>
<dbReference type="AGR" id="ZFIN:ZDB-GENE-041111-264"/>
<dbReference type="CTD" id="81610"/>
<dbReference type="ZFIN" id="ZDB-GENE-041111-264">
    <property type="gene designation" value="fam83d"/>
</dbReference>
<dbReference type="eggNOG" id="ENOG502RC3Z">
    <property type="taxonomic scope" value="Eukaryota"/>
</dbReference>
<dbReference type="InParanoid" id="A4QP72"/>
<dbReference type="OrthoDB" id="9882762at2759"/>
<dbReference type="PhylomeDB" id="A4QP72"/>
<dbReference type="Reactome" id="R-DRE-177929">
    <property type="pathway name" value="Signaling by EGFR"/>
</dbReference>
<dbReference type="PRO" id="PR:A4QP72"/>
<dbReference type="Proteomes" id="UP000000437">
    <property type="component" value="Chromosome 11"/>
</dbReference>
<dbReference type="GO" id="GO:0005737">
    <property type="term" value="C:cytoplasm"/>
    <property type="evidence" value="ECO:0000250"/>
    <property type="project" value="UniProtKB"/>
</dbReference>
<dbReference type="GO" id="GO:0005829">
    <property type="term" value="C:cytosol"/>
    <property type="evidence" value="ECO:0000318"/>
    <property type="project" value="GO_Central"/>
</dbReference>
<dbReference type="GO" id="GO:0097431">
    <property type="term" value="C:mitotic spindle pole"/>
    <property type="evidence" value="ECO:0000250"/>
    <property type="project" value="UniProtKB"/>
</dbReference>
<dbReference type="GO" id="GO:0019901">
    <property type="term" value="F:protein kinase binding"/>
    <property type="evidence" value="ECO:0000318"/>
    <property type="project" value="GO_Central"/>
</dbReference>
<dbReference type="GO" id="GO:0051301">
    <property type="term" value="P:cell division"/>
    <property type="evidence" value="ECO:0007669"/>
    <property type="project" value="UniProtKB-KW"/>
</dbReference>
<dbReference type="GO" id="GO:0008283">
    <property type="term" value="P:cell population proliferation"/>
    <property type="evidence" value="ECO:0000250"/>
    <property type="project" value="UniProtKB"/>
</dbReference>
<dbReference type="GO" id="GO:0051310">
    <property type="term" value="P:metaphase chromosome alignment"/>
    <property type="evidence" value="ECO:0000250"/>
    <property type="project" value="UniProtKB"/>
</dbReference>
<dbReference type="GO" id="GO:1902808">
    <property type="term" value="P:positive regulation of cell cycle G1/S phase transition"/>
    <property type="evidence" value="ECO:0000318"/>
    <property type="project" value="GO_Central"/>
</dbReference>
<dbReference type="GO" id="GO:1902480">
    <property type="term" value="P:protein localization to mitotic spindle"/>
    <property type="evidence" value="ECO:0000318"/>
    <property type="project" value="GO_Central"/>
</dbReference>
<dbReference type="GO" id="GO:0070372">
    <property type="term" value="P:regulation of ERK1 and ERK2 cascade"/>
    <property type="evidence" value="ECO:0000250"/>
    <property type="project" value="UniProtKB"/>
</dbReference>
<dbReference type="GO" id="GO:0032006">
    <property type="term" value="P:regulation of TOR signaling"/>
    <property type="evidence" value="ECO:0000318"/>
    <property type="project" value="GO_Central"/>
</dbReference>
<dbReference type="GO" id="GO:0007165">
    <property type="term" value="P:signal transduction"/>
    <property type="evidence" value="ECO:0000318"/>
    <property type="project" value="GO_Central"/>
</dbReference>
<dbReference type="CDD" id="cd09184">
    <property type="entry name" value="PLDc_FAM83D_N"/>
    <property type="match status" value="1"/>
</dbReference>
<dbReference type="FunFam" id="3.30.870.10:FF:000004">
    <property type="entry name" value="protein FAM83H isoform X2"/>
    <property type="match status" value="1"/>
</dbReference>
<dbReference type="Gene3D" id="3.30.870.10">
    <property type="entry name" value="Endonuclease Chain A"/>
    <property type="match status" value="1"/>
</dbReference>
<dbReference type="InterPro" id="IPR050944">
    <property type="entry name" value="FAM83"/>
</dbReference>
<dbReference type="InterPro" id="IPR012461">
    <property type="entry name" value="SACK1"/>
</dbReference>
<dbReference type="PANTHER" id="PTHR16181">
    <property type="entry name" value="PROTEIN FAM83A-RELATED"/>
    <property type="match status" value="1"/>
</dbReference>
<dbReference type="PANTHER" id="PTHR16181:SF29">
    <property type="entry name" value="PROTEIN FAM83A-RELATED"/>
    <property type="match status" value="1"/>
</dbReference>
<dbReference type="Pfam" id="PF07894">
    <property type="entry name" value="SACK1"/>
    <property type="match status" value="1"/>
</dbReference>
<dbReference type="SUPFAM" id="SSF56024">
    <property type="entry name" value="Phospholipase D/nuclease"/>
    <property type="match status" value="1"/>
</dbReference>
<accession>A4QP72</accession>
<reference key="1">
    <citation type="submission" date="2007-04" db="EMBL/GenBank/DDBJ databases">
        <authorList>
            <consortium name="NIH - Zebrafish Gene Collection (ZGC) project"/>
        </authorList>
    </citation>
    <scope>NUCLEOTIDE SEQUENCE [LARGE SCALE MRNA]</scope>
    <source>
        <tissue>Ovary</tissue>
    </source>
</reference>
<comment type="function">
    <text evidence="1">May regulate cell proliferation, growth, migration and epithelial to mesenchymal transition. May also be important for proper chromosome congression and alignment during mitosis.</text>
</comment>
<comment type="subcellular location">
    <subcellularLocation>
        <location evidence="1">Cytoplasm</location>
    </subcellularLocation>
    <subcellularLocation>
        <location evidence="1">Cytoplasm</location>
        <location evidence="1">Cytoskeleton</location>
        <location evidence="1">Spindle</location>
    </subcellularLocation>
    <subcellularLocation>
        <location evidence="1">Cytoplasm</location>
        <location evidence="1">Cytoskeleton</location>
        <location evidence="1">Spindle pole</location>
    </subcellularLocation>
</comment>
<comment type="similarity">
    <text evidence="3">Belongs to the FAM83 family.</text>
</comment>
<keyword id="KW-0131">Cell cycle</keyword>
<keyword id="KW-0132">Cell division</keyword>
<keyword id="KW-0963">Cytoplasm</keyword>
<keyword id="KW-0206">Cytoskeleton</keyword>
<keyword id="KW-0498">Mitosis</keyword>
<keyword id="KW-1185">Reference proteome</keyword>
<protein>
    <recommendedName>
        <fullName evidence="3">Protein FAM83D</fullName>
    </recommendedName>
</protein>